<sequence>MIQQETRLKVADNSGAREILTIKVLGGSGRKFANIGDVIVASVKQATPGGAVKKGDVVKAVIVRTKTGARRPDGSYIKFDDNAAVIIRDDKTPRGTRIFGPVARELREGGYMKIVSLAPEVL</sequence>
<name>RL14_STRPM</name>
<gene>
    <name evidence="1" type="primary">rplN</name>
    <name type="ordered locus">M28_Spy0053</name>
</gene>
<organism>
    <name type="scientific">Streptococcus pyogenes serotype M28 (strain MGAS6180)</name>
    <dbReference type="NCBI Taxonomy" id="319701"/>
    <lineage>
        <taxon>Bacteria</taxon>
        <taxon>Bacillati</taxon>
        <taxon>Bacillota</taxon>
        <taxon>Bacilli</taxon>
        <taxon>Lactobacillales</taxon>
        <taxon>Streptococcaceae</taxon>
        <taxon>Streptococcus</taxon>
    </lineage>
</organism>
<feature type="chain" id="PRO_1000055724" description="Large ribosomal subunit protein uL14">
    <location>
        <begin position="1"/>
        <end position="122"/>
    </location>
</feature>
<proteinExistence type="inferred from homology"/>
<dbReference type="EMBL" id="CP000056">
    <property type="protein sequence ID" value="AAX71167.1"/>
    <property type="molecule type" value="Genomic_DNA"/>
</dbReference>
<dbReference type="RefSeq" id="WP_000615920.1">
    <property type="nucleotide sequence ID" value="NC_007296.2"/>
</dbReference>
<dbReference type="SMR" id="Q48VT9"/>
<dbReference type="GeneID" id="83689563"/>
<dbReference type="KEGG" id="spb:M28_Spy0053"/>
<dbReference type="HOGENOM" id="CLU_095071_2_1_9"/>
<dbReference type="GO" id="GO:0022625">
    <property type="term" value="C:cytosolic large ribosomal subunit"/>
    <property type="evidence" value="ECO:0007669"/>
    <property type="project" value="TreeGrafter"/>
</dbReference>
<dbReference type="GO" id="GO:0070180">
    <property type="term" value="F:large ribosomal subunit rRNA binding"/>
    <property type="evidence" value="ECO:0007669"/>
    <property type="project" value="TreeGrafter"/>
</dbReference>
<dbReference type="GO" id="GO:0003735">
    <property type="term" value="F:structural constituent of ribosome"/>
    <property type="evidence" value="ECO:0007669"/>
    <property type="project" value="InterPro"/>
</dbReference>
<dbReference type="GO" id="GO:0006412">
    <property type="term" value="P:translation"/>
    <property type="evidence" value="ECO:0007669"/>
    <property type="project" value="UniProtKB-UniRule"/>
</dbReference>
<dbReference type="CDD" id="cd00337">
    <property type="entry name" value="Ribosomal_uL14"/>
    <property type="match status" value="1"/>
</dbReference>
<dbReference type="FunFam" id="2.40.150.20:FF:000001">
    <property type="entry name" value="50S ribosomal protein L14"/>
    <property type="match status" value="1"/>
</dbReference>
<dbReference type="Gene3D" id="2.40.150.20">
    <property type="entry name" value="Ribosomal protein L14"/>
    <property type="match status" value="1"/>
</dbReference>
<dbReference type="HAMAP" id="MF_01367">
    <property type="entry name" value="Ribosomal_uL14"/>
    <property type="match status" value="1"/>
</dbReference>
<dbReference type="InterPro" id="IPR000218">
    <property type="entry name" value="Ribosomal_uL14"/>
</dbReference>
<dbReference type="InterPro" id="IPR005745">
    <property type="entry name" value="Ribosomal_uL14_bac-type"/>
</dbReference>
<dbReference type="InterPro" id="IPR019972">
    <property type="entry name" value="Ribosomal_uL14_CS"/>
</dbReference>
<dbReference type="InterPro" id="IPR036853">
    <property type="entry name" value="Ribosomal_uL14_sf"/>
</dbReference>
<dbReference type="NCBIfam" id="TIGR01067">
    <property type="entry name" value="rplN_bact"/>
    <property type="match status" value="1"/>
</dbReference>
<dbReference type="PANTHER" id="PTHR11761">
    <property type="entry name" value="50S/60S RIBOSOMAL PROTEIN L14/L23"/>
    <property type="match status" value="1"/>
</dbReference>
<dbReference type="PANTHER" id="PTHR11761:SF3">
    <property type="entry name" value="LARGE RIBOSOMAL SUBUNIT PROTEIN UL14M"/>
    <property type="match status" value="1"/>
</dbReference>
<dbReference type="Pfam" id="PF00238">
    <property type="entry name" value="Ribosomal_L14"/>
    <property type="match status" value="1"/>
</dbReference>
<dbReference type="SMART" id="SM01374">
    <property type="entry name" value="Ribosomal_L14"/>
    <property type="match status" value="1"/>
</dbReference>
<dbReference type="SUPFAM" id="SSF50193">
    <property type="entry name" value="Ribosomal protein L14"/>
    <property type="match status" value="1"/>
</dbReference>
<dbReference type="PROSITE" id="PS00049">
    <property type="entry name" value="RIBOSOMAL_L14"/>
    <property type="match status" value="1"/>
</dbReference>
<protein>
    <recommendedName>
        <fullName evidence="1">Large ribosomal subunit protein uL14</fullName>
    </recommendedName>
    <alternativeName>
        <fullName evidence="2">50S ribosomal protein L14</fullName>
    </alternativeName>
</protein>
<keyword id="KW-0687">Ribonucleoprotein</keyword>
<keyword id="KW-0689">Ribosomal protein</keyword>
<keyword id="KW-0694">RNA-binding</keyword>
<keyword id="KW-0699">rRNA-binding</keyword>
<evidence type="ECO:0000255" key="1">
    <source>
        <dbReference type="HAMAP-Rule" id="MF_01367"/>
    </source>
</evidence>
<evidence type="ECO:0000305" key="2"/>
<reference key="1">
    <citation type="journal article" date="2005" name="J. Infect. Dis.">
        <title>Genome sequence of a serotype M28 strain of group A Streptococcus: potential new insights into puerperal sepsis and bacterial disease specificity.</title>
        <authorList>
            <person name="Green N.M."/>
            <person name="Zhang S."/>
            <person name="Porcella S.F."/>
            <person name="Nagiec M.J."/>
            <person name="Barbian K.D."/>
            <person name="Beres S.B."/>
            <person name="Lefebvre R.B."/>
            <person name="Musser J.M."/>
        </authorList>
    </citation>
    <scope>NUCLEOTIDE SEQUENCE [LARGE SCALE GENOMIC DNA]</scope>
    <source>
        <strain>MGAS6180</strain>
    </source>
</reference>
<accession>Q48VT9</accession>
<comment type="function">
    <text evidence="1">Binds to 23S rRNA. Forms part of two intersubunit bridges in the 70S ribosome.</text>
</comment>
<comment type="subunit">
    <text evidence="1">Part of the 50S ribosomal subunit. Forms a cluster with proteins L3 and L19. In the 70S ribosome, L14 and L19 interact and together make contacts with the 16S rRNA in bridges B5 and B8.</text>
</comment>
<comment type="similarity">
    <text evidence="1">Belongs to the universal ribosomal protein uL14 family.</text>
</comment>